<feature type="chain" id="PRO_1000126118" description="Small ribosomal subunit protein eS4">
    <location>
        <begin position="1"/>
        <end position="238"/>
    </location>
</feature>
<feature type="domain" description="S4 RNA-binding" evidence="1">
    <location>
        <begin position="38"/>
        <end position="109"/>
    </location>
</feature>
<reference key="1">
    <citation type="submission" date="2008-03" db="EMBL/GenBank/DDBJ databases">
        <title>Complete sequence of Thermoproteus neutrophilus V24Sta.</title>
        <authorList>
            <consortium name="US DOE Joint Genome Institute"/>
            <person name="Copeland A."/>
            <person name="Lucas S."/>
            <person name="Lapidus A."/>
            <person name="Glavina del Rio T."/>
            <person name="Dalin E."/>
            <person name="Tice H."/>
            <person name="Bruce D."/>
            <person name="Goodwin L."/>
            <person name="Pitluck S."/>
            <person name="Sims D."/>
            <person name="Brettin T."/>
            <person name="Detter J.C."/>
            <person name="Han C."/>
            <person name="Kuske C.R."/>
            <person name="Schmutz J."/>
            <person name="Larimer F."/>
            <person name="Land M."/>
            <person name="Hauser L."/>
            <person name="Kyrpides N."/>
            <person name="Mikhailova N."/>
            <person name="Biddle J.F."/>
            <person name="Zhang Z."/>
            <person name="Fitz-Gibbon S.T."/>
            <person name="Lowe T.M."/>
            <person name="Saltikov C."/>
            <person name="House C.H."/>
            <person name="Richardson P."/>
        </authorList>
    </citation>
    <scope>NUCLEOTIDE SEQUENCE [LARGE SCALE GENOMIC DNA]</scope>
    <source>
        <strain>DSM 2338 / JCM 9278 / NBRC 100436 / V24Sta</strain>
    </source>
</reference>
<name>RS4E_PYRNV</name>
<organism>
    <name type="scientific">Pyrobaculum neutrophilum (strain DSM 2338 / JCM 9278 / NBRC 100436 / V24Sta)</name>
    <name type="common">Thermoproteus neutrophilus</name>
    <dbReference type="NCBI Taxonomy" id="444157"/>
    <lineage>
        <taxon>Archaea</taxon>
        <taxon>Thermoproteota</taxon>
        <taxon>Thermoprotei</taxon>
        <taxon>Thermoproteales</taxon>
        <taxon>Thermoproteaceae</taxon>
        <taxon>Pyrobaculum</taxon>
    </lineage>
</organism>
<evidence type="ECO:0000255" key="1">
    <source>
        <dbReference type="HAMAP-Rule" id="MF_00485"/>
    </source>
</evidence>
<evidence type="ECO:0000305" key="2"/>
<protein>
    <recommendedName>
        <fullName evidence="1">Small ribosomal subunit protein eS4</fullName>
    </recommendedName>
    <alternativeName>
        <fullName evidence="2">30S ribosomal protein S4e</fullName>
    </alternativeName>
</protein>
<dbReference type="EMBL" id="CP001014">
    <property type="protein sequence ID" value="ACB40474.1"/>
    <property type="molecule type" value="Genomic_DNA"/>
</dbReference>
<dbReference type="RefSeq" id="WP_012350893.1">
    <property type="nucleotide sequence ID" value="NC_010525.1"/>
</dbReference>
<dbReference type="SMR" id="B1Y9S4"/>
<dbReference type="STRING" id="444157.Tneu_1550"/>
<dbReference type="GeneID" id="6166242"/>
<dbReference type="KEGG" id="tne:Tneu_1550"/>
<dbReference type="eggNOG" id="arCOG04093">
    <property type="taxonomic scope" value="Archaea"/>
</dbReference>
<dbReference type="HOGENOM" id="CLU_060400_0_0_2"/>
<dbReference type="OrthoDB" id="372073at2157"/>
<dbReference type="Proteomes" id="UP000001694">
    <property type="component" value="Chromosome"/>
</dbReference>
<dbReference type="GO" id="GO:0022627">
    <property type="term" value="C:cytosolic small ribosomal subunit"/>
    <property type="evidence" value="ECO:0007669"/>
    <property type="project" value="TreeGrafter"/>
</dbReference>
<dbReference type="GO" id="GO:0019843">
    <property type="term" value="F:rRNA binding"/>
    <property type="evidence" value="ECO:0007669"/>
    <property type="project" value="UniProtKB-KW"/>
</dbReference>
<dbReference type="GO" id="GO:0003735">
    <property type="term" value="F:structural constituent of ribosome"/>
    <property type="evidence" value="ECO:0007669"/>
    <property type="project" value="InterPro"/>
</dbReference>
<dbReference type="GO" id="GO:0006412">
    <property type="term" value="P:translation"/>
    <property type="evidence" value="ECO:0007669"/>
    <property type="project" value="UniProtKB-UniRule"/>
</dbReference>
<dbReference type="CDD" id="cd00165">
    <property type="entry name" value="S4"/>
    <property type="match status" value="1"/>
</dbReference>
<dbReference type="FunFam" id="3.10.290.10:FF:000002">
    <property type="entry name" value="40S ribosomal protein S4"/>
    <property type="match status" value="1"/>
</dbReference>
<dbReference type="Gene3D" id="2.40.50.740">
    <property type="match status" value="1"/>
</dbReference>
<dbReference type="Gene3D" id="3.10.290.10">
    <property type="entry name" value="RNA-binding S4 domain"/>
    <property type="match status" value="1"/>
</dbReference>
<dbReference type="HAMAP" id="MF_00485">
    <property type="entry name" value="Ribosomal_eS4"/>
    <property type="match status" value="1"/>
</dbReference>
<dbReference type="InterPro" id="IPR000876">
    <property type="entry name" value="Ribosomal_eS4"/>
</dbReference>
<dbReference type="InterPro" id="IPR013845">
    <property type="entry name" value="Ribosomal_eS4_central_region"/>
</dbReference>
<dbReference type="InterPro" id="IPR038237">
    <property type="entry name" value="Ribosomal_eS4_central_sf"/>
</dbReference>
<dbReference type="InterPro" id="IPR013843">
    <property type="entry name" value="Ribosomal_eS4_N"/>
</dbReference>
<dbReference type="InterPro" id="IPR002942">
    <property type="entry name" value="S4_RNA-bd"/>
</dbReference>
<dbReference type="InterPro" id="IPR036986">
    <property type="entry name" value="S4_RNA-bd_sf"/>
</dbReference>
<dbReference type="NCBIfam" id="NF003312">
    <property type="entry name" value="PRK04313.1"/>
    <property type="match status" value="1"/>
</dbReference>
<dbReference type="PANTHER" id="PTHR11581">
    <property type="entry name" value="30S/40S RIBOSOMAL PROTEIN S4"/>
    <property type="match status" value="1"/>
</dbReference>
<dbReference type="PANTHER" id="PTHR11581:SF0">
    <property type="entry name" value="SMALL RIBOSOMAL SUBUNIT PROTEIN ES4"/>
    <property type="match status" value="1"/>
</dbReference>
<dbReference type="Pfam" id="PF00900">
    <property type="entry name" value="Ribosomal_S4e"/>
    <property type="match status" value="1"/>
</dbReference>
<dbReference type="Pfam" id="PF08071">
    <property type="entry name" value="RS4NT"/>
    <property type="match status" value="1"/>
</dbReference>
<dbReference type="Pfam" id="PF01479">
    <property type="entry name" value="S4"/>
    <property type="match status" value="1"/>
</dbReference>
<dbReference type="PIRSF" id="PIRSF002116">
    <property type="entry name" value="Ribosomal_S4"/>
    <property type="match status" value="1"/>
</dbReference>
<dbReference type="SMART" id="SM00363">
    <property type="entry name" value="S4"/>
    <property type="match status" value="1"/>
</dbReference>
<dbReference type="SUPFAM" id="SSF55174">
    <property type="entry name" value="Alpha-L RNA-binding motif"/>
    <property type="match status" value="1"/>
</dbReference>
<dbReference type="PROSITE" id="PS50889">
    <property type="entry name" value="S4"/>
    <property type="match status" value="1"/>
</dbReference>
<accession>B1Y9S4</accession>
<proteinExistence type="inferred from homology"/>
<keyword id="KW-0687">Ribonucleoprotein</keyword>
<keyword id="KW-0689">Ribosomal protein</keyword>
<keyword id="KW-0694">RNA-binding</keyword>
<keyword id="KW-0699">rRNA-binding</keyword>
<gene>
    <name evidence="1" type="primary">rps4e</name>
    <name type="ordered locus">Tneu_1550</name>
</gene>
<comment type="similarity">
    <text evidence="1">Belongs to the eukaryotic ribosomal protein eS4 family.</text>
</comment>
<sequence>MVHLRRTTSPYWWPIPRKAGGVWAVRPSPGPHSLAYSIPLALVIRDVLRYAKTLREARMIISRGYIKVDGVVRRNYKFPVGLMDVVEIVPTGEIYRVVPDERSYYALVPITSEEADLKLLRVEGKTAVKGGRLQVHFHDGRNLIMPAETARQIKTFDSVLYDLKARTVRSHIPMRLGVYAVVTHGGNVGFHGQLSEIVWTLKRRQSVVLLKRGEEAKRTILDYIMAVGAEAPVIKISP</sequence>